<comment type="function">
    <text evidence="2">May have antimicrobial activity.</text>
</comment>
<proteinExistence type="evidence at protein level"/>
<evidence type="ECO:0000256" key="1">
    <source>
        <dbReference type="SAM" id="MobiDB-lite"/>
    </source>
</evidence>
<evidence type="ECO:0000269" key="2">
    <source>
    </source>
</evidence>
<evidence type="ECO:0000303" key="3">
    <source>
    </source>
</evidence>
<evidence type="ECO:0000305" key="4"/>
<feature type="chain" id="PRO_0000417914" description="Putative antimicrobial protein 2">
    <location>
        <begin position="1"/>
        <end position="20" status="greater than"/>
    </location>
</feature>
<feature type="region of interest" description="Disordered" evidence="1">
    <location>
        <begin position="1"/>
        <end position="20"/>
    </location>
</feature>
<feature type="non-terminal residue" evidence="3">
    <location>
        <position position="20"/>
    </location>
</feature>
<organism>
    <name type="scientific">Cenchritis muricatus</name>
    <name type="common">Beaded periwinkle</name>
    <dbReference type="NCBI Taxonomy" id="197001"/>
    <lineage>
        <taxon>Eukaryota</taxon>
        <taxon>Metazoa</taxon>
        <taxon>Spiralia</taxon>
        <taxon>Lophotrochozoa</taxon>
        <taxon>Mollusca</taxon>
        <taxon>Gastropoda</taxon>
        <taxon>Caenogastropoda</taxon>
        <taxon>Littorinimorpha</taxon>
        <taxon>Littorinoidea</taxon>
        <taxon>Littorinidae</taxon>
        <taxon>Cenchritis</taxon>
    </lineage>
</organism>
<sequence>DLPECCSATELELDSGKQTS</sequence>
<accession>B3EWI6</accession>
<reference evidence="4" key="1">
    <citation type="journal article" date="2012" name="Curr. Microbiol.">
        <title>Screening of antimicrobials from Caribbean sea animals and isolation of bactericidal proteins from the littoral mollusk Cenchritis muricatus.</title>
        <authorList>
            <person name="Lopez-Abarrategui C."/>
            <person name="Alba A."/>
            <person name="Lima L.A."/>
            <person name="Maria-Neto S."/>
            <person name="Vasconcelos I.M."/>
            <person name="Oliveira J.T."/>
            <person name="Dias S.C."/>
            <person name="Otero-Gonzalez A.J."/>
            <person name="Franco O.L."/>
        </authorList>
    </citation>
    <scope>PROTEIN SEQUENCE</scope>
    <scope>POSSIBLE FUNCTION</scope>
</reference>
<keyword id="KW-0929">Antimicrobial</keyword>
<keyword id="KW-0903">Direct protein sequencing</keyword>
<name>AMP2_CENMR</name>
<protein>
    <recommendedName>
        <fullName>Putative antimicrobial protein 2</fullName>
    </recommendedName>
</protein>